<feature type="chain" id="PRO_0000253122" description="Putative membrane protein insertion efficiency factor">
    <location>
        <begin position="1"/>
        <end position="89"/>
    </location>
</feature>
<feature type="region of interest" description="Disordered" evidence="2">
    <location>
        <begin position="69"/>
        <end position="89"/>
    </location>
</feature>
<gene>
    <name type="ordered locus">amb4355</name>
</gene>
<dbReference type="EMBL" id="AP007255">
    <property type="protein sequence ID" value="BAE53159.1"/>
    <property type="molecule type" value="Genomic_DNA"/>
</dbReference>
<dbReference type="RefSeq" id="WP_011386702.1">
    <property type="nucleotide sequence ID" value="NC_007626.1"/>
</dbReference>
<dbReference type="STRING" id="342108.amb4355"/>
<dbReference type="KEGG" id="mag:amb4355"/>
<dbReference type="HOGENOM" id="CLU_144811_2_2_5"/>
<dbReference type="OrthoDB" id="9801753at2"/>
<dbReference type="Proteomes" id="UP000007058">
    <property type="component" value="Chromosome"/>
</dbReference>
<dbReference type="GO" id="GO:0005886">
    <property type="term" value="C:plasma membrane"/>
    <property type="evidence" value="ECO:0007669"/>
    <property type="project" value="UniProtKB-SubCell"/>
</dbReference>
<dbReference type="HAMAP" id="MF_00386">
    <property type="entry name" value="UPF0161_YidD"/>
    <property type="match status" value="1"/>
</dbReference>
<dbReference type="InterPro" id="IPR002696">
    <property type="entry name" value="Membr_insert_effic_factor_YidD"/>
</dbReference>
<dbReference type="NCBIfam" id="TIGR00278">
    <property type="entry name" value="membrane protein insertion efficiency factor YidD"/>
    <property type="match status" value="1"/>
</dbReference>
<dbReference type="PANTHER" id="PTHR33383">
    <property type="entry name" value="MEMBRANE PROTEIN INSERTION EFFICIENCY FACTOR-RELATED"/>
    <property type="match status" value="1"/>
</dbReference>
<dbReference type="PANTHER" id="PTHR33383:SF1">
    <property type="entry name" value="MEMBRANE PROTEIN INSERTION EFFICIENCY FACTOR-RELATED"/>
    <property type="match status" value="1"/>
</dbReference>
<dbReference type="Pfam" id="PF01809">
    <property type="entry name" value="YidD"/>
    <property type="match status" value="1"/>
</dbReference>
<dbReference type="SMART" id="SM01234">
    <property type="entry name" value="Haemolytic"/>
    <property type="match status" value="1"/>
</dbReference>
<proteinExistence type="inferred from homology"/>
<keyword id="KW-0997">Cell inner membrane</keyword>
<keyword id="KW-1003">Cell membrane</keyword>
<keyword id="KW-0472">Membrane</keyword>
<evidence type="ECO:0000255" key="1">
    <source>
        <dbReference type="HAMAP-Rule" id="MF_00386"/>
    </source>
</evidence>
<evidence type="ECO:0000256" key="2">
    <source>
        <dbReference type="SAM" id="MobiDB-lite"/>
    </source>
</evidence>
<name>YIDD_PARM1</name>
<organism>
    <name type="scientific">Paramagnetospirillum magneticum (strain ATCC 700264 / AMB-1)</name>
    <name type="common">Magnetospirillum magneticum</name>
    <dbReference type="NCBI Taxonomy" id="342108"/>
    <lineage>
        <taxon>Bacteria</taxon>
        <taxon>Pseudomonadati</taxon>
        <taxon>Pseudomonadota</taxon>
        <taxon>Alphaproteobacteria</taxon>
        <taxon>Rhodospirillales</taxon>
        <taxon>Magnetospirillaceae</taxon>
        <taxon>Paramagnetospirillum</taxon>
    </lineage>
</organism>
<reference key="1">
    <citation type="journal article" date="2005" name="DNA Res.">
        <title>Complete genome sequence of the facultative anaerobic magnetotactic bacterium Magnetospirillum sp. strain AMB-1.</title>
        <authorList>
            <person name="Matsunaga T."/>
            <person name="Okamura Y."/>
            <person name="Fukuda Y."/>
            <person name="Wahyudi A.T."/>
            <person name="Murase Y."/>
            <person name="Takeyama H."/>
        </authorList>
    </citation>
    <scope>NUCLEOTIDE SEQUENCE [LARGE SCALE GENOMIC DNA]</scope>
    <source>
        <strain>ATCC 700264 / AMB-1</strain>
    </source>
</reference>
<comment type="function">
    <text evidence="1">Could be involved in insertion of integral membrane proteins into the membrane.</text>
</comment>
<comment type="subcellular location">
    <subcellularLocation>
        <location evidence="1">Cell inner membrane</location>
        <topology evidence="1">Peripheral membrane protein</topology>
        <orientation evidence="1">Cytoplasmic side</orientation>
    </subcellularLocation>
</comment>
<comment type="similarity">
    <text evidence="1">Belongs to the UPF0161 family.</text>
</comment>
<protein>
    <recommendedName>
        <fullName evidence="1">Putative membrane protein insertion efficiency factor</fullName>
    </recommendedName>
</protein>
<sequence length="89" mass="9662">MNPIGLGMRGLIRLYQLLLSPVLPASCRFTPSCSSYAMQAIEAHGPVGGTWLGLKRICRCHPWNDGGYDPVPPAHTERGGTMCPSRLPE</sequence>
<accession>Q2VZ16</accession>